<keyword id="KW-0067">ATP-binding</keyword>
<keyword id="KW-0227">DNA damage</keyword>
<keyword id="KW-0234">DNA repair</keyword>
<keyword id="KW-0238">DNA-binding</keyword>
<keyword id="KW-0378">Hydrolase</keyword>
<keyword id="KW-0479">Metal-binding</keyword>
<keyword id="KW-0547">Nucleotide-binding</keyword>
<keyword id="KW-1185">Reference proteome</keyword>
<keyword id="KW-0346">Stress response</keyword>
<keyword id="KW-0862">Zinc</keyword>
<keyword id="KW-0863">Zinc-finger</keyword>
<proteinExistence type="inferred from homology"/>
<gene>
    <name evidence="1" type="primary">radA</name>
    <name type="synonym">sms</name>
    <name type="ordered locus">HP_0223</name>
</gene>
<dbReference type="EC" id="3.6.4.-" evidence="1"/>
<dbReference type="EMBL" id="AE000511">
    <property type="protein sequence ID" value="AAD07290.1"/>
    <property type="molecule type" value="Genomic_DNA"/>
</dbReference>
<dbReference type="PIR" id="G64547">
    <property type="entry name" value="G64547"/>
</dbReference>
<dbReference type="RefSeq" id="NP_207021.1">
    <property type="nucleotide sequence ID" value="NC_000915.1"/>
</dbReference>
<dbReference type="RefSeq" id="WP_015056031.1">
    <property type="nucleotide sequence ID" value="NC_018939.1"/>
</dbReference>
<dbReference type="SMR" id="P56148"/>
<dbReference type="FunCoup" id="P56148">
    <property type="interactions" value="254"/>
</dbReference>
<dbReference type="IntAct" id="P56148">
    <property type="interactions" value="1"/>
</dbReference>
<dbReference type="MINT" id="P56148"/>
<dbReference type="STRING" id="85962.HP_0223"/>
<dbReference type="PaxDb" id="85962-C694_01125"/>
<dbReference type="EnsemblBacteria" id="AAD07290">
    <property type="protein sequence ID" value="AAD07290"/>
    <property type="gene ID" value="HP_0223"/>
</dbReference>
<dbReference type="KEGG" id="heo:C694_01125"/>
<dbReference type="KEGG" id="hpy:HP_0223"/>
<dbReference type="PATRIC" id="fig|85962.47.peg.241"/>
<dbReference type="eggNOG" id="COG1066">
    <property type="taxonomic scope" value="Bacteria"/>
</dbReference>
<dbReference type="InParanoid" id="P56148"/>
<dbReference type="OrthoDB" id="9803906at2"/>
<dbReference type="PhylomeDB" id="P56148"/>
<dbReference type="Proteomes" id="UP000000429">
    <property type="component" value="Chromosome"/>
</dbReference>
<dbReference type="GO" id="GO:0005524">
    <property type="term" value="F:ATP binding"/>
    <property type="evidence" value="ECO:0007669"/>
    <property type="project" value="UniProtKB-UniRule"/>
</dbReference>
<dbReference type="GO" id="GO:0016887">
    <property type="term" value="F:ATP hydrolysis activity"/>
    <property type="evidence" value="ECO:0007669"/>
    <property type="project" value="InterPro"/>
</dbReference>
<dbReference type="GO" id="GO:0140664">
    <property type="term" value="F:ATP-dependent DNA damage sensor activity"/>
    <property type="evidence" value="ECO:0007669"/>
    <property type="project" value="InterPro"/>
</dbReference>
<dbReference type="GO" id="GO:0003684">
    <property type="term" value="F:damaged DNA binding"/>
    <property type="evidence" value="ECO:0007669"/>
    <property type="project" value="InterPro"/>
</dbReference>
<dbReference type="GO" id="GO:0008270">
    <property type="term" value="F:zinc ion binding"/>
    <property type="evidence" value="ECO:0007669"/>
    <property type="project" value="UniProtKB-KW"/>
</dbReference>
<dbReference type="GO" id="GO:0000725">
    <property type="term" value="P:recombinational repair"/>
    <property type="evidence" value="ECO:0000318"/>
    <property type="project" value="GO_Central"/>
</dbReference>
<dbReference type="CDD" id="cd01121">
    <property type="entry name" value="RadA_SMS_N"/>
    <property type="match status" value="1"/>
</dbReference>
<dbReference type="FunFam" id="3.40.50.300:FF:000050">
    <property type="entry name" value="DNA repair protein RadA"/>
    <property type="match status" value="1"/>
</dbReference>
<dbReference type="Gene3D" id="3.30.230.10">
    <property type="match status" value="1"/>
</dbReference>
<dbReference type="Gene3D" id="3.40.50.300">
    <property type="entry name" value="P-loop containing nucleotide triphosphate hydrolases"/>
    <property type="match status" value="1"/>
</dbReference>
<dbReference type="HAMAP" id="MF_01498">
    <property type="entry name" value="RadA_bact"/>
    <property type="match status" value="1"/>
</dbReference>
<dbReference type="InterPro" id="IPR003593">
    <property type="entry name" value="AAA+_ATPase"/>
</dbReference>
<dbReference type="InterPro" id="IPR004504">
    <property type="entry name" value="DNA_repair_RadA"/>
</dbReference>
<dbReference type="InterPro" id="IPR027417">
    <property type="entry name" value="P-loop_NTPase"/>
</dbReference>
<dbReference type="InterPro" id="IPR020588">
    <property type="entry name" value="RecA_ATP-bd"/>
</dbReference>
<dbReference type="InterPro" id="IPR020568">
    <property type="entry name" value="Ribosomal_Su5_D2-typ_SF"/>
</dbReference>
<dbReference type="InterPro" id="IPR014721">
    <property type="entry name" value="Ribsml_uS5_D2-typ_fold_subgr"/>
</dbReference>
<dbReference type="InterPro" id="IPR041166">
    <property type="entry name" value="Rubredoxin_2"/>
</dbReference>
<dbReference type="NCBIfam" id="TIGR00416">
    <property type="entry name" value="sms"/>
    <property type="match status" value="1"/>
</dbReference>
<dbReference type="PANTHER" id="PTHR32472">
    <property type="entry name" value="DNA REPAIR PROTEIN RADA"/>
    <property type="match status" value="1"/>
</dbReference>
<dbReference type="PANTHER" id="PTHR32472:SF10">
    <property type="entry name" value="DNA REPAIR PROTEIN RADA-LIKE PROTEIN"/>
    <property type="match status" value="1"/>
</dbReference>
<dbReference type="Pfam" id="PF13481">
    <property type="entry name" value="AAA_25"/>
    <property type="match status" value="1"/>
</dbReference>
<dbReference type="Pfam" id="PF13541">
    <property type="entry name" value="ChlI"/>
    <property type="match status" value="1"/>
</dbReference>
<dbReference type="Pfam" id="PF18073">
    <property type="entry name" value="Zn_ribbon_LapB"/>
    <property type="match status" value="1"/>
</dbReference>
<dbReference type="PRINTS" id="PR01874">
    <property type="entry name" value="DNAREPAIRADA"/>
</dbReference>
<dbReference type="SMART" id="SM00382">
    <property type="entry name" value="AAA"/>
    <property type="match status" value="1"/>
</dbReference>
<dbReference type="SUPFAM" id="SSF52540">
    <property type="entry name" value="P-loop containing nucleoside triphosphate hydrolases"/>
    <property type="match status" value="1"/>
</dbReference>
<dbReference type="SUPFAM" id="SSF54211">
    <property type="entry name" value="Ribosomal protein S5 domain 2-like"/>
    <property type="match status" value="1"/>
</dbReference>
<dbReference type="PROSITE" id="PS50162">
    <property type="entry name" value="RECA_2"/>
    <property type="match status" value="1"/>
</dbReference>
<reference key="1">
    <citation type="journal article" date="1997" name="Nature">
        <title>The complete genome sequence of the gastric pathogen Helicobacter pylori.</title>
        <authorList>
            <person name="Tomb J.-F."/>
            <person name="White O."/>
            <person name="Kerlavage A.R."/>
            <person name="Clayton R.A."/>
            <person name="Sutton G.G."/>
            <person name="Fleischmann R.D."/>
            <person name="Ketchum K.A."/>
            <person name="Klenk H.-P."/>
            <person name="Gill S.R."/>
            <person name="Dougherty B.A."/>
            <person name="Nelson K.E."/>
            <person name="Quackenbush J."/>
            <person name="Zhou L."/>
            <person name="Kirkness E.F."/>
            <person name="Peterson S.N."/>
            <person name="Loftus B.J."/>
            <person name="Richardson D.L."/>
            <person name="Dodson R.J."/>
            <person name="Khalak H.G."/>
            <person name="Glodek A."/>
            <person name="McKenney K."/>
            <person name="FitzGerald L.M."/>
            <person name="Lee N."/>
            <person name="Adams M.D."/>
            <person name="Hickey E.K."/>
            <person name="Berg D.E."/>
            <person name="Gocayne J.D."/>
            <person name="Utterback T.R."/>
            <person name="Peterson J.D."/>
            <person name="Kelley J.M."/>
            <person name="Cotton M.D."/>
            <person name="Weidman J.F."/>
            <person name="Fujii C."/>
            <person name="Bowman C."/>
            <person name="Watthey L."/>
            <person name="Wallin E."/>
            <person name="Hayes W.S."/>
            <person name="Borodovsky M."/>
            <person name="Karp P.D."/>
            <person name="Smith H.O."/>
            <person name="Fraser C.M."/>
            <person name="Venter J.C."/>
        </authorList>
    </citation>
    <scope>NUCLEOTIDE SEQUENCE [LARGE SCALE GENOMIC DNA]</scope>
    <source>
        <strain>ATCC 700392 / 26695</strain>
    </source>
</reference>
<protein>
    <recommendedName>
        <fullName evidence="1">DNA repair protein RadA</fullName>
        <ecNumber evidence="1">3.6.4.-</ecNumber>
    </recommendedName>
    <alternativeName>
        <fullName evidence="1">Branch migration protein RadA</fullName>
    </alternativeName>
</protein>
<sequence length="448" mass="49451">MAKKTSLFECQHCGFTSPKWLGKCVQCNAWESFIELNQAQKEVLNTLKKPIPQAQKSVSIAAIEHEEVIKFSSTQSELDIVLGGGIAKGGLYLVGGSPGVGKSTLLLKVASGLAKNQQKVLYVSGEESLSQIKMRAIRLDCIEKELYLLNEINWPVIKANIESENYFACVIDSIQTLYSPEISSAPGSISQVREITFELMRLAKTRDIAIFIIGHITKEGSIAGPRVLEHMVDSVLYFEGDPSRELRILRSFKNRFGPTSEIGLFEMKEQGLVSAKEASSLFFSKEEPMEGSAITITLEGSRALILEIQALVSECSFGSPKRLANGFDTNRLNMLIALLEKKLEIPLNRHDVFINVSGGIKISEPACDLAVIASILSSFKNRKIDNKTAFLGEVSLNGRILEAPNLNARLKEMENYGFLKAILPKKPSQKTSIKCYEANAVGKIVEWM</sequence>
<organism>
    <name type="scientific">Helicobacter pylori (strain ATCC 700392 / 26695)</name>
    <name type="common">Campylobacter pylori</name>
    <dbReference type="NCBI Taxonomy" id="85962"/>
    <lineage>
        <taxon>Bacteria</taxon>
        <taxon>Pseudomonadati</taxon>
        <taxon>Campylobacterota</taxon>
        <taxon>Epsilonproteobacteria</taxon>
        <taxon>Campylobacterales</taxon>
        <taxon>Helicobacteraceae</taxon>
        <taxon>Helicobacter</taxon>
    </lineage>
</organism>
<accession>P56148</accession>
<evidence type="ECO:0000255" key="1">
    <source>
        <dbReference type="HAMAP-Rule" id="MF_01498"/>
    </source>
</evidence>
<name>RADA_HELPY</name>
<feature type="chain" id="PRO_0000187928" description="DNA repair protein RadA">
    <location>
        <begin position="1"/>
        <end position="448"/>
    </location>
</feature>
<feature type="zinc finger region" description="C4-type" evidence="1">
    <location>
        <begin position="10"/>
        <end position="27"/>
    </location>
</feature>
<feature type="region of interest" description="Lon-protease-like" evidence="1">
    <location>
        <begin position="351"/>
        <end position="448"/>
    </location>
</feature>
<feature type="short sequence motif" description="RadA KNRFG motif" evidence="1">
    <location>
        <begin position="253"/>
        <end position="257"/>
    </location>
</feature>
<feature type="binding site" evidence="1">
    <location>
        <begin position="96"/>
        <end position="103"/>
    </location>
    <ligand>
        <name>ATP</name>
        <dbReference type="ChEBI" id="CHEBI:30616"/>
    </ligand>
</feature>
<comment type="function">
    <text evidence="1">DNA-dependent ATPase involved in processing of recombination intermediates, plays a role in repairing DNA breaks. Stimulates the branch migration of RecA-mediated strand transfer reactions, allowing the 3' invading strand to extend heteroduplex DNA faster. Binds ssDNA in the presence of ADP but not other nucleotides, has ATPase activity that is stimulated by ssDNA and various branched DNA structures, but inhibited by SSB. Does not have RecA's homology-searching function.</text>
</comment>
<comment type="domain">
    <text evidence="1">Has a putative N-terminal zinc-finger, a middle region with homology to RecA with ATPase motifs including the RadA KNRFG motif, while the C-terminus is homologous to Lon protease.</text>
</comment>
<comment type="similarity">
    <text evidence="1">Belongs to the RecA family. RadA subfamily.</text>
</comment>